<dbReference type="EMBL" id="AE004091">
    <property type="protein sequence ID" value="AAG07962.1"/>
    <property type="molecule type" value="Genomic_DNA"/>
</dbReference>
<dbReference type="PIR" id="D83073">
    <property type="entry name" value="D83073"/>
</dbReference>
<dbReference type="RefSeq" id="NP_253264.1">
    <property type="nucleotide sequence ID" value="NC_002516.2"/>
</dbReference>
<dbReference type="RefSeq" id="WP_003094773.1">
    <property type="nucleotide sequence ID" value="NZ_QZGE01000004.1"/>
</dbReference>
<dbReference type="FunCoup" id="Q9HVL0">
    <property type="interactions" value="15"/>
</dbReference>
<dbReference type="STRING" id="208964.PA4574"/>
<dbReference type="PaxDb" id="208964-PA4574"/>
<dbReference type="GeneID" id="880966"/>
<dbReference type="KEGG" id="pae:PA4574"/>
<dbReference type="PATRIC" id="fig|208964.12.peg.4786"/>
<dbReference type="PseudoCAP" id="PA4574"/>
<dbReference type="HOGENOM" id="CLU_097887_1_1_6"/>
<dbReference type="InParanoid" id="Q9HVL0"/>
<dbReference type="OrthoDB" id="9783569at2"/>
<dbReference type="PhylomeDB" id="Q9HVL0"/>
<dbReference type="BioCyc" id="PAER208964:G1FZ6-4667-MONOMER"/>
<dbReference type="Proteomes" id="UP000002438">
    <property type="component" value="Chromosome"/>
</dbReference>
<dbReference type="GO" id="GO:0005886">
    <property type="term" value="C:plasma membrane"/>
    <property type="evidence" value="ECO:0000318"/>
    <property type="project" value="GO_Central"/>
</dbReference>
<dbReference type="HAMAP" id="MF_00143">
    <property type="entry name" value="UPF0114"/>
    <property type="match status" value="1"/>
</dbReference>
<dbReference type="InterPro" id="IPR005134">
    <property type="entry name" value="UPF0114"/>
</dbReference>
<dbReference type="InterPro" id="IPR020761">
    <property type="entry name" value="UPF0114_bac"/>
</dbReference>
<dbReference type="NCBIfam" id="TIGR00645">
    <property type="entry name" value="HI0507"/>
    <property type="match status" value="1"/>
</dbReference>
<dbReference type="PANTHER" id="PTHR38596">
    <property type="entry name" value="UPF0114 PROTEIN YQHA"/>
    <property type="match status" value="1"/>
</dbReference>
<dbReference type="PANTHER" id="PTHR38596:SF1">
    <property type="entry name" value="UPF0114 PROTEIN YQHA"/>
    <property type="match status" value="1"/>
</dbReference>
<dbReference type="Pfam" id="PF03350">
    <property type="entry name" value="UPF0114"/>
    <property type="match status" value="1"/>
</dbReference>
<gene>
    <name type="ordered locus">PA4574</name>
</gene>
<evidence type="ECO:0000255" key="1">
    <source>
        <dbReference type="HAMAP-Rule" id="MF_00143"/>
    </source>
</evidence>
<reference key="1">
    <citation type="journal article" date="2000" name="Nature">
        <title>Complete genome sequence of Pseudomonas aeruginosa PAO1, an opportunistic pathogen.</title>
        <authorList>
            <person name="Stover C.K."/>
            <person name="Pham X.-Q.T."/>
            <person name="Erwin A.L."/>
            <person name="Mizoguchi S.D."/>
            <person name="Warrener P."/>
            <person name="Hickey M.J."/>
            <person name="Brinkman F.S.L."/>
            <person name="Hufnagle W.O."/>
            <person name="Kowalik D.J."/>
            <person name="Lagrou M."/>
            <person name="Garber R.L."/>
            <person name="Goltry L."/>
            <person name="Tolentino E."/>
            <person name="Westbrock-Wadman S."/>
            <person name="Yuan Y."/>
            <person name="Brody L.L."/>
            <person name="Coulter S.N."/>
            <person name="Folger K.R."/>
            <person name="Kas A."/>
            <person name="Larbig K."/>
            <person name="Lim R.M."/>
            <person name="Smith K.A."/>
            <person name="Spencer D.H."/>
            <person name="Wong G.K.-S."/>
            <person name="Wu Z."/>
            <person name="Paulsen I.T."/>
            <person name="Reizer J."/>
            <person name="Saier M.H. Jr."/>
            <person name="Hancock R.E.W."/>
            <person name="Lory S."/>
            <person name="Olson M.V."/>
        </authorList>
    </citation>
    <scope>NUCLEOTIDE SEQUENCE [LARGE SCALE GENOMIC DNA]</scope>
    <source>
        <strain>ATCC 15692 / DSM 22644 / CIP 104116 / JCM 14847 / LMG 12228 / 1C / PRS 101 / PAO1</strain>
    </source>
</reference>
<comment type="subcellular location">
    <subcellularLocation>
        <location evidence="1">Cell membrane</location>
        <topology evidence="1">Multi-pass membrane protein</topology>
    </subcellularLocation>
</comment>
<comment type="similarity">
    <text evidence="1">Belongs to the UPF0114 family.</text>
</comment>
<feature type="chain" id="PRO_0000214374" description="UPF0114 protein PA4574">
    <location>
        <begin position="1"/>
        <end position="162"/>
    </location>
</feature>
<feature type="transmembrane region" description="Helical" evidence="1">
    <location>
        <begin position="10"/>
        <end position="32"/>
    </location>
</feature>
<feature type="transmembrane region" description="Helical" evidence="1">
    <location>
        <begin position="53"/>
        <end position="75"/>
    </location>
</feature>
<feature type="transmembrane region" description="Helical" evidence="1">
    <location>
        <begin position="136"/>
        <end position="156"/>
    </location>
</feature>
<organism>
    <name type="scientific">Pseudomonas aeruginosa (strain ATCC 15692 / DSM 22644 / CIP 104116 / JCM 14847 / LMG 12228 / 1C / PRS 101 / PAO1)</name>
    <dbReference type="NCBI Taxonomy" id="208964"/>
    <lineage>
        <taxon>Bacteria</taxon>
        <taxon>Pseudomonadati</taxon>
        <taxon>Pseudomonadota</taxon>
        <taxon>Gammaproteobacteria</taxon>
        <taxon>Pseudomonadales</taxon>
        <taxon>Pseudomonadaceae</taxon>
        <taxon>Pseudomonas</taxon>
    </lineage>
</organism>
<accession>Q9HVL0</accession>
<proteinExistence type="inferred from homology"/>
<name>Y4574_PSEAE</name>
<sequence length="162" mass="18325">MERFFENAMYASRWLLAPIYMGLSLALLALTIKFFQEIFHVIPNIFAMAEADLILVLLSLIDMALVGGLLVMVMISGYENFVSQLDIDEGKEKLSWLGKMDSGSLKNKVAASIVAISSIHLLRIFMDAKNVPDNKLMWYVIIHMTFVLSAFAMGYLDKQTRH</sequence>
<protein>
    <recommendedName>
        <fullName evidence="1">UPF0114 protein PA4574</fullName>
    </recommendedName>
</protein>
<keyword id="KW-1003">Cell membrane</keyword>
<keyword id="KW-0472">Membrane</keyword>
<keyword id="KW-1185">Reference proteome</keyword>
<keyword id="KW-0812">Transmembrane</keyword>
<keyword id="KW-1133">Transmembrane helix</keyword>